<dbReference type="EMBL" id="AB024036">
    <property type="protein sequence ID" value="BAB02829.1"/>
    <property type="status" value="ALT_SEQ"/>
    <property type="molecule type" value="Genomic_DNA"/>
</dbReference>
<dbReference type="EMBL" id="CP002686">
    <property type="protein sequence ID" value="AEE76382.1"/>
    <property type="molecule type" value="Genomic_DNA"/>
</dbReference>
<dbReference type="RefSeq" id="NP_188681.1">
    <property type="nucleotide sequence ID" value="NM_112937.2"/>
</dbReference>
<dbReference type="SMR" id="Q9LTP6"/>
<dbReference type="FunCoup" id="Q9LTP6">
    <property type="interactions" value="742"/>
</dbReference>
<dbReference type="STRING" id="3702.Q9LTP6"/>
<dbReference type="PaxDb" id="3702-AT3G20460.1"/>
<dbReference type="ProteomicsDB" id="222061"/>
<dbReference type="EnsemblPlants" id="AT3G20460.1">
    <property type="protein sequence ID" value="AT3G20460.1"/>
    <property type="gene ID" value="AT3G20460"/>
</dbReference>
<dbReference type="GeneID" id="821591"/>
<dbReference type="Gramene" id="AT3G20460.1">
    <property type="protein sequence ID" value="AT3G20460.1"/>
    <property type="gene ID" value="AT3G20460"/>
</dbReference>
<dbReference type="KEGG" id="ath:AT3G20460"/>
<dbReference type="Araport" id="AT3G20460"/>
<dbReference type="TAIR" id="AT3G20460"/>
<dbReference type="eggNOG" id="KOG0254">
    <property type="taxonomic scope" value="Eukaryota"/>
</dbReference>
<dbReference type="HOGENOM" id="CLU_001265_30_5_1"/>
<dbReference type="InParanoid" id="Q9LTP6"/>
<dbReference type="OMA" id="ESIRMTP"/>
<dbReference type="OrthoDB" id="6133115at2759"/>
<dbReference type="PhylomeDB" id="Q9LTP6"/>
<dbReference type="PRO" id="PR:Q9LTP6"/>
<dbReference type="Proteomes" id="UP000006548">
    <property type="component" value="Chromosome 3"/>
</dbReference>
<dbReference type="ExpressionAtlas" id="Q9LTP6">
    <property type="expression patterns" value="baseline and differential"/>
</dbReference>
<dbReference type="GO" id="GO:0016020">
    <property type="term" value="C:membrane"/>
    <property type="evidence" value="ECO:0007669"/>
    <property type="project" value="UniProtKB-SubCell"/>
</dbReference>
<dbReference type="GO" id="GO:0051119">
    <property type="term" value="F:sugar transmembrane transporter activity"/>
    <property type="evidence" value="ECO:0007669"/>
    <property type="project" value="InterPro"/>
</dbReference>
<dbReference type="CDD" id="cd17358">
    <property type="entry name" value="MFS_GLUT6_8_Class3_like"/>
    <property type="match status" value="1"/>
</dbReference>
<dbReference type="FunFam" id="1.20.1250.20:FF:000043">
    <property type="entry name" value="sugar transporter ERD6-like 6"/>
    <property type="match status" value="1"/>
</dbReference>
<dbReference type="Gene3D" id="1.20.1250.20">
    <property type="entry name" value="MFS general substrate transporter like domains"/>
    <property type="match status" value="1"/>
</dbReference>
<dbReference type="InterPro" id="IPR020846">
    <property type="entry name" value="MFS_dom"/>
</dbReference>
<dbReference type="InterPro" id="IPR044775">
    <property type="entry name" value="MFS_ERD6/Tret1-like"/>
</dbReference>
<dbReference type="InterPro" id="IPR005828">
    <property type="entry name" value="MFS_sugar_transport-like"/>
</dbReference>
<dbReference type="InterPro" id="IPR036259">
    <property type="entry name" value="MFS_trans_sf"/>
</dbReference>
<dbReference type="InterPro" id="IPR050549">
    <property type="entry name" value="MFS_Trehalose_Transporter"/>
</dbReference>
<dbReference type="InterPro" id="IPR003663">
    <property type="entry name" value="Sugar/inositol_transpt"/>
</dbReference>
<dbReference type="InterPro" id="IPR005829">
    <property type="entry name" value="Sugar_transporter_CS"/>
</dbReference>
<dbReference type="NCBIfam" id="TIGR00879">
    <property type="entry name" value="SP"/>
    <property type="match status" value="1"/>
</dbReference>
<dbReference type="PANTHER" id="PTHR48021">
    <property type="match status" value="1"/>
</dbReference>
<dbReference type="PANTHER" id="PTHR48021:SF82">
    <property type="entry name" value="SUGAR TRANSPORTER ERD6-LIKE 13-RELATED"/>
    <property type="match status" value="1"/>
</dbReference>
<dbReference type="Pfam" id="PF00083">
    <property type="entry name" value="Sugar_tr"/>
    <property type="match status" value="1"/>
</dbReference>
<dbReference type="PRINTS" id="PR00171">
    <property type="entry name" value="SUGRTRNSPORT"/>
</dbReference>
<dbReference type="SUPFAM" id="SSF103473">
    <property type="entry name" value="MFS general substrate transporter"/>
    <property type="match status" value="1"/>
</dbReference>
<dbReference type="PROSITE" id="PS50850">
    <property type="entry name" value="MFS"/>
    <property type="match status" value="1"/>
</dbReference>
<dbReference type="PROSITE" id="PS00216">
    <property type="entry name" value="SUGAR_TRANSPORT_1"/>
    <property type="match status" value="2"/>
</dbReference>
<dbReference type="PROSITE" id="PS00217">
    <property type="entry name" value="SUGAR_TRANSPORT_2"/>
    <property type="match status" value="1"/>
</dbReference>
<feature type="chain" id="PRO_0000259863" description="Putative sugar transporter ERD6-like 13">
    <location>
        <begin position="1"/>
        <end position="488"/>
    </location>
</feature>
<feature type="transmembrane region" description="Helical; Name=1" evidence="2">
    <location>
        <begin position="51"/>
        <end position="71"/>
    </location>
</feature>
<feature type="transmembrane region" description="Helical; Name=2" evidence="2">
    <location>
        <begin position="89"/>
        <end position="109"/>
    </location>
</feature>
<feature type="transmembrane region" description="Helical; Name=3" evidence="2">
    <location>
        <begin position="116"/>
        <end position="138"/>
    </location>
</feature>
<feature type="transmembrane region" description="Helical; Name=4" evidence="2">
    <location>
        <begin position="151"/>
        <end position="171"/>
    </location>
</feature>
<feature type="transmembrane region" description="Helical; Name=5" evidence="2">
    <location>
        <begin position="182"/>
        <end position="202"/>
    </location>
</feature>
<feature type="transmembrane region" description="Helical; Name=6" evidence="2">
    <location>
        <begin position="207"/>
        <end position="227"/>
    </location>
</feature>
<feature type="transmembrane region" description="Helical; Name=7" evidence="2">
    <location>
        <begin position="291"/>
        <end position="311"/>
    </location>
</feature>
<feature type="transmembrane region" description="Helical; Name=8" evidence="2">
    <location>
        <begin position="324"/>
        <end position="344"/>
    </location>
</feature>
<feature type="transmembrane region" description="Helical; Name=9" evidence="2">
    <location>
        <begin position="353"/>
        <end position="373"/>
    </location>
</feature>
<feature type="transmembrane region" description="Helical; Name=10" evidence="2">
    <location>
        <begin position="390"/>
        <end position="410"/>
    </location>
</feature>
<feature type="transmembrane region" description="Helical; Name=11" evidence="2">
    <location>
        <begin position="423"/>
        <end position="445"/>
    </location>
</feature>
<feature type="transmembrane region" description="Helical; Name=12" evidence="2">
    <location>
        <begin position="451"/>
        <end position="471"/>
    </location>
</feature>
<gene>
    <name type="ordered locus">At3g20460</name>
    <name type="ORF">MQC12.5</name>
</gene>
<organism>
    <name type="scientific">Arabidopsis thaliana</name>
    <name type="common">Mouse-ear cress</name>
    <dbReference type="NCBI Taxonomy" id="3702"/>
    <lineage>
        <taxon>Eukaryota</taxon>
        <taxon>Viridiplantae</taxon>
        <taxon>Streptophyta</taxon>
        <taxon>Embryophyta</taxon>
        <taxon>Tracheophyta</taxon>
        <taxon>Spermatophyta</taxon>
        <taxon>Magnoliopsida</taxon>
        <taxon>eudicotyledons</taxon>
        <taxon>Gunneridae</taxon>
        <taxon>Pentapetalae</taxon>
        <taxon>rosids</taxon>
        <taxon>malvids</taxon>
        <taxon>Brassicales</taxon>
        <taxon>Brassicaceae</taxon>
        <taxon>Camelineae</taxon>
        <taxon>Arabidopsis</taxon>
    </lineage>
</organism>
<name>EDL13_ARATH</name>
<sequence>MGDEPLLQKVKIQEDIESVPLLQKVKIQEDIESVKGIRVNNDGEEDGPVTLILLFTTFTALCGTFSYGTAAGFTSPAQTGIMAGLNLSLAEFSFFGAVLTIGGLVGAAMSGKLADVFGRRGALGVSNSFCMAGWLMIAFSQATWSLDIGRLFLGVAAGVASYVVPVYIVEIAPKKVRGTFSAINSLVMCASVAVTYLLGSVISWQKLALISTVPCVFEFVGLFFIPESPRWLSRNGRVKESEVSLQRLRGNNTDITKEAAEIKKYMDNLQEFKEDGFFDLFNPRYSRVVTVGIGLLVLQQLGGLSGYTFYLSSIFKKSGFPNNVGVMMASVVQSVTSVLGIVIVDKYGRRSLLTVATIMMCLGSLITGLSFLFQSYGLLEHYTPISTFMGVLVFLTSITIGIGGIPWVMISEMTPINIKGSAGTLCNLTSWSSNWFVSYTFNFLFQWSSSGVFFIYTMISGVGILFVMKMVPETRGRSLEEIQAAITR</sequence>
<accession>Q9LTP6</accession>
<proteinExistence type="inferred from homology"/>
<reference key="1">
    <citation type="journal article" date="2000" name="DNA Res.">
        <title>Structural analysis of Arabidopsis thaliana chromosome 3. I. Sequence features of the regions of 4,504,864 bp covered by sixty P1 and TAC clones.</title>
        <authorList>
            <person name="Sato S."/>
            <person name="Nakamura Y."/>
            <person name="Kaneko T."/>
            <person name="Katoh T."/>
            <person name="Asamizu E."/>
            <person name="Tabata S."/>
        </authorList>
    </citation>
    <scope>NUCLEOTIDE SEQUENCE [LARGE SCALE GENOMIC DNA]</scope>
    <source>
        <strain>cv. Columbia</strain>
    </source>
</reference>
<reference key="2">
    <citation type="journal article" date="2017" name="Plant J.">
        <title>Araport11: a complete reannotation of the Arabidopsis thaliana reference genome.</title>
        <authorList>
            <person name="Cheng C.Y."/>
            <person name="Krishnakumar V."/>
            <person name="Chan A.P."/>
            <person name="Thibaud-Nissen F."/>
            <person name="Schobel S."/>
            <person name="Town C.D."/>
        </authorList>
    </citation>
    <scope>GENOME REANNOTATION</scope>
    <source>
        <strain>cv. Columbia</strain>
    </source>
</reference>
<reference key="3">
    <citation type="journal article" date="2006" name="BMC Evol. Biol.">
        <title>The monosaccharide transporter gene family in land plants is ancient and shows differential subfamily expression and expansion across lineages.</title>
        <authorList>
            <person name="Johnson D.A."/>
            <person name="Hill J.P."/>
            <person name="Thomas M.A."/>
        </authorList>
    </citation>
    <scope>GENE FAMILY</scope>
</reference>
<evidence type="ECO:0000250" key="1"/>
<evidence type="ECO:0000255" key="2"/>
<evidence type="ECO:0000305" key="3"/>
<comment type="function">
    <text evidence="3">Sugar transporter.</text>
</comment>
<comment type="subcellular location">
    <subcellularLocation>
        <location evidence="1">Membrane</location>
        <topology evidence="1">Multi-pass membrane protein</topology>
    </subcellularLocation>
</comment>
<comment type="similarity">
    <text evidence="3">Belongs to the major facilitator superfamily. Sugar transporter (TC 2.A.1.1) family.</text>
</comment>
<comment type="sequence caution" evidence="3">
    <conflict type="erroneous gene model prediction">
        <sequence resource="EMBL-CDS" id="BAB02829"/>
    </conflict>
</comment>
<keyword id="KW-0472">Membrane</keyword>
<keyword id="KW-1185">Reference proteome</keyword>
<keyword id="KW-0762">Sugar transport</keyword>
<keyword id="KW-0812">Transmembrane</keyword>
<keyword id="KW-1133">Transmembrane helix</keyword>
<keyword id="KW-0813">Transport</keyword>
<protein>
    <recommendedName>
        <fullName>Putative sugar transporter ERD6-like 13</fullName>
    </recommendedName>
</protein>